<protein>
    <recommendedName>
        <fullName>Exopolygalacturonase B</fullName>
        <ecNumber>3.2.1.67</ecNumber>
    </recommendedName>
    <alternativeName>
        <fullName>Galacturan 1,4-alpha-galacturonidase B</fullName>
    </alternativeName>
    <alternativeName>
        <fullName>Poly(1,4-alpha-D-galacturonide)galacturonohydrolase B</fullName>
    </alternativeName>
</protein>
<evidence type="ECO:0000250" key="1"/>
<evidence type="ECO:0000255" key="2"/>
<evidence type="ECO:0000269" key="3">
    <source>
    </source>
</evidence>
<evidence type="ECO:0000305" key="4"/>
<organism>
    <name type="scientific">Aspergillus niger</name>
    <dbReference type="NCBI Taxonomy" id="5061"/>
    <lineage>
        <taxon>Eukaryota</taxon>
        <taxon>Fungi</taxon>
        <taxon>Dikarya</taxon>
        <taxon>Ascomycota</taxon>
        <taxon>Pezizomycotina</taxon>
        <taxon>Eurotiomycetes</taxon>
        <taxon>Eurotiomycetidae</taxon>
        <taxon>Eurotiales</taxon>
        <taxon>Aspergillaceae</taxon>
        <taxon>Aspergillus</taxon>
        <taxon>Aspergillus subgen. Circumdati</taxon>
    </lineage>
</organism>
<proteinExistence type="inferred from homology"/>
<feature type="signal peptide" evidence="2">
    <location>
        <begin position="1"/>
        <end position="15"/>
    </location>
</feature>
<feature type="chain" id="PRO_0000393678" description="Exopolygalacturonase B">
    <location>
        <begin position="16"/>
        <end position="438"/>
    </location>
</feature>
<feature type="repeat" description="PbH1 1">
    <location>
        <begin position="209"/>
        <end position="248"/>
    </location>
</feature>
<feature type="repeat" description="PbH1 2">
    <location>
        <begin position="295"/>
        <end position="316"/>
    </location>
</feature>
<feature type="repeat" description="PbH1 3">
    <location>
        <begin position="327"/>
        <end position="348"/>
    </location>
</feature>
<feature type="repeat" description="PbH1 4">
    <location>
        <begin position="398"/>
        <end position="430"/>
    </location>
</feature>
<feature type="active site" description="Proton donor" evidence="1">
    <location>
        <position position="255"/>
    </location>
</feature>
<feature type="active site" evidence="1">
    <location>
        <position position="278"/>
    </location>
</feature>
<feature type="glycosylation site" description="N-linked (GlcNAc...) asparagine" evidence="2">
    <location>
        <position position="118"/>
    </location>
</feature>
<feature type="glycosylation site" description="N-linked (GlcNAc...) asparagine" evidence="2">
    <location>
        <position position="185"/>
    </location>
</feature>
<feature type="glycosylation site" description="N-linked (GlcNAc...) asparagine" evidence="2">
    <location>
        <position position="225"/>
    </location>
</feature>
<feature type="glycosylation site" description="N-linked (GlcNAc...) asparagine" evidence="2">
    <location>
        <position position="263"/>
    </location>
</feature>
<feature type="glycosylation site" description="N-linked (GlcNAc...) asparagine" evidence="2">
    <location>
        <position position="275"/>
    </location>
</feature>
<feature type="glycosylation site" description="N-linked (GlcNAc...) asparagine" evidence="2">
    <location>
        <position position="302"/>
    </location>
</feature>
<feature type="glycosylation site" description="N-linked (GlcNAc...) asparagine" evidence="2">
    <location>
        <position position="329"/>
    </location>
</feature>
<feature type="glycosylation site" description="N-linked (GlcNAc...) asparagine" evidence="2">
    <location>
        <position position="354"/>
    </location>
</feature>
<feature type="glycosylation site" description="N-linked (GlcNAc...) asparagine" evidence="2">
    <location>
        <position position="366"/>
    </location>
</feature>
<feature type="glycosylation site" description="N-linked (GlcNAc...) asparagine" evidence="2">
    <location>
        <position position="400"/>
    </location>
</feature>
<feature type="glycosylation site" description="N-linked (GlcNAc...) asparagine" evidence="2">
    <location>
        <position position="407"/>
    </location>
</feature>
<feature type="disulfide bond" evidence="1">
    <location>
        <begin position="257"/>
        <end position="274"/>
    </location>
</feature>
<feature type="disulfide bond" evidence="1">
    <location>
        <begin position="392"/>
        <end position="398"/>
    </location>
</feature>
<keyword id="KW-0961">Cell wall biogenesis/degradation</keyword>
<keyword id="KW-1015">Disulfide bond</keyword>
<keyword id="KW-0325">Glycoprotein</keyword>
<keyword id="KW-0326">Glycosidase</keyword>
<keyword id="KW-0378">Hydrolase</keyword>
<keyword id="KW-0677">Repeat</keyword>
<keyword id="KW-0964">Secreted</keyword>
<keyword id="KW-0732">Signal</keyword>
<name>PGXB_ASPNG</name>
<comment type="function">
    <text evidence="3">Specific in hydrolyzing the terminal glycosidic bond of polygalacturonic acid and oligogalacturonates.</text>
</comment>
<comment type="catalytic activity">
    <reaction>
        <text>[(1-&gt;4)-alpha-D-galacturonosyl](n) + H2O = alpha-D-galacturonate + [(1-&gt;4)-alpha-D-galacturonosyl](n-1)</text>
        <dbReference type="Rhea" id="RHEA:14117"/>
        <dbReference type="Rhea" id="RHEA-COMP:14570"/>
        <dbReference type="Rhea" id="RHEA-COMP:14572"/>
        <dbReference type="ChEBI" id="CHEBI:15377"/>
        <dbReference type="ChEBI" id="CHEBI:58658"/>
        <dbReference type="ChEBI" id="CHEBI:140523"/>
        <dbReference type="EC" id="3.2.1.67"/>
    </reaction>
</comment>
<comment type="subcellular location">
    <subcellularLocation>
        <location evidence="1">Secreted</location>
    </subcellularLocation>
</comment>
<comment type="similarity">
    <text evidence="4">Belongs to the glycosyl hydrolase 28 family.</text>
</comment>
<reference key="1">
    <citation type="journal article" date="2006" name="Biochem. J.">
        <title>A new group of exo-acting family 28 glycoside hydrolases of Aspergillus niger that are involved in pectin degradation.</title>
        <authorList>
            <person name="Martens-Uzunova E.S."/>
            <person name="Zandleven J.S."/>
            <person name="Benen J.A."/>
            <person name="Awad H."/>
            <person name="Kools H.J."/>
            <person name="Beldman G."/>
            <person name="Voragen A.G."/>
            <person name="Van den Berg J.A."/>
            <person name="Schaap P.J."/>
        </authorList>
    </citation>
    <scope>NUCLEOTIDE SEQUENCE [GENOMIC DNA]</scope>
    <scope>FUNCTION</scope>
    <source>
        <strain>CBS 513.88</strain>
    </source>
</reference>
<dbReference type="EC" id="3.2.1.67"/>
<dbReference type="EMBL" id="DQ374424">
    <property type="protein sequence ID" value="ABD61564.1"/>
    <property type="molecule type" value="Genomic_DNA"/>
</dbReference>
<dbReference type="SMR" id="Q27UB1"/>
<dbReference type="GlyCosmos" id="Q27UB1">
    <property type="glycosylation" value="11 sites, No reported glycans"/>
</dbReference>
<dbReference type="PaxDb" id="5061-CADANGAP00003593"/>
<dbReference type="EnsemblFungi" id="CAK38430">
    <property type="protein sequence ID" value="CAK38430"/>
    <property type="gene ID" value="An03g06740"/>
</dbReference>
<dbReference type="VEuPathDB" id="FungiDB:An03g06740"/>
<dbReference type="VEuPathDB" id="FungiDB:ASPNIDRAFT2_1186687"/>
<dbReference type="VEuPathDB" id="FungiDB:ATCC64974_76140"/>
<dbReference type="VEuPathDB" id="FungiDB:M747DRAFT_368542"/>
<dbReference type="eggNOG" id="ENOG502QPPR">
    <property type="taxonomic scope" value="Eukaryota"/>
</dbReference>
<dbReference type="BioCyc" id="MetaCyc:MONOMER-20555"/>
<dbReference type="GO" id="GO:0005576">
    <property type="term" value="C:extracellular region"/>
    <property type="evidence" value="ECO:0007669"/>
    <property type="project" value="UniProtKB-SubCell"/>
</dbReference>
<dbReference type="GO" id="GO:0047911">
    <property type="term" value="F:galacturan 1,4-alpha-galacturonidase activity"/>
    <property type="evidence" value="ECO:0007669"/>
    <property type="project" value="UniProtKB-EC"/>
</dbReference>
<dbReference type="GO" id="GO:0004650">
    <property type="term" value="F:polygalacturonase activity"/>
    <property type="evidence" value="ECO:0007669"/>
    <property type="project" value="InterPro"/>
</dbReference>
<dbReference type="GO" id="GO:0005975">
    <property type="term" value="P:carbohydrate metabolic process"/>
    <property type="evidence" value="ECO:0007669"/>
    <property type="project" value="InterPro"/>
</dbReference>
<dbReference type="GO" id="GO:0071555">
    <property type="term" value="P:cell wall organization"/>
    <property type="evidence" value="ECO:0007669"/>
    <property type="project" value="UniProtKB-KW"/>
</dbReference>
<dbReference type="FunFam" id="2.160.20.10:FF:000040">
    <property type="entry name" value="Probable exopolygalacturonase B"/>
    <property type="match status" value="1"/>
</dbReference>
<dbReference type="Gene3D" id="2.160.20.10">
    <property type="entry name" value="Single-stranded right-handed beta-helix, Pectin lyase-like"/>
    <property type="match status" value="1"/>
</dbReference>
<dbReference type="InterPro" id="IPR000743">
    <property type="entry name" value="Glyco_hydro_28"/>
</dbReference>
<dbReference type="InterPro" id="IPR012334">
    <property type="entry name" value="Pectin_lyas_fold"/>
</dbReference>
<dbReference type="InterPro" id="IPR011050">
    <property type="entry name" value="Pectin_lyase_fold/virulence"/>
</dbReference>
<dbReference type="PANTHER" id="PTHR31736">
    <property type="match status" value="1"/>
</dbReference>
<dbReference type="PANTHER" id="PTHR31736:SF6">
    <property type="entry name" value="EXOPOLYGALACTURONASE B-RELATED"/>
    <property type="match status" value="1"/>
</dbReference>
<dbReference type="Pfam" id="PF00295">
    <property type="entry name" value="Glyco_hydro_28"/>
    <property type="match status" value="1"/>
</dbReference>
<dbReference type="SUPFAM" id="SSF51126">
    <property type="entry name" value="Pectin lyase-like"/>
    <property type="match status" value="1"/>
</dbReference>
<accession>Q27UB1</accession>
<sequence>MYLLPLTLFLTAAFGVSIPRSPLIPGAQIVPASSTADLRAIGAQHHKYPDRETVTIRASRNALDDVSSDFLWGLKQANHGGRLLLKQGETYVIGKKLDLTFLDNIEVQLEGEIQFTNNITYWQANNFYYDFQKSITFWRWGGQDIKIFGSGVLNGNGQKWYDEFAGKQILVYNTFYRPILFLTDNATRISVEGITQLNSPCWTNFFVRTNDVSFDNVYIHAFSTNASSDPANTDGMDSLDVDGVSFTNMRIDVGDDCFSPKPNTTNIFVQNMWCNNTHGVSMGSIGQYAGEMDIIENVYIENVTLLNGQNGARLKAWAGQDVGYGRINNVTYKNIQIQNTDAPIVLDQCYFDINATECAKYPSAVNITNILFENIWGSSSGKDGKIVADLVCSPDAVCTNITLSNVNLTSPKGTAEIVCDDIQGGIGVDCVSDESVTR</sequence>
<gene>
    <name type="primary">pgxB</name>
</gene>